<accession>P03063</accession>
<reference key="1">
    <citation type="journal article" date="1980" name="Nucleic Acids Res.">
        <title>Conformational alteration of mRNA structure and the posttranscriptional regulation of erythromycin-induced drug resistance.</title>
        <authorList>
            <person name="Gryczan T.J."/>
            <person name="Grandi G."/>
            <person name="Hahn J."/>
            <person name="Grandi R."/>
            <person name="Dubnau D."/>
        </authorList>
    </citation>
    <scope>NUCLEOTIDE SEQUENCE [GENOMIC DNA]</scope>
    <source>
        <plasmid>pE194</plasmid>
    </source>
</reference>
<reference key="2">
    <citation type="journal article" date="1980" name="Proc. Natl. Acad. Sci. U.S.A.">
        <title>Posttranscriptional modification of mRNA conformation: mechanism that regulates erythromycin-induced resistance.</title>
        <authorList>
            <person name="Horinouchi S."/>
            <person name="Weisblum B."/>
        </authorList>
    </citation>
    <scope>NUCLEOTIDE SEQUENCE [GENOMIC DNA]</scope>
    <source>
        <plasmid>pE194</plasmid>
    </source>
</reference>
<reference key="3">
    <citation type="journal article" date="1985" name="J. Mol. Biol.">
        <title>Messenger RNA from Staphylococcus aureus that specifies macrolide-lincosamide-streptogramin resistance. Demonstration of its conformations and of the leader peptide it encodes.</title>
        <authorList>
            <person name="Mayford M."/>
            <person name="Weisblum B."/>
        </authorList>
    </citation>
    <scope>NUCLEOTIDE SEQUENCE [GENOMIC DNA]</scope>
    <source>
        <plasmid>pE194</plasmid>
    </source>
</reference>
<reference key="4">
    <citation type="journal article" date="1989" name="J. Mol. Biol.">
        <title>ermC leader peptide. Amino acid sequence critical for induction by translational attenuation.</title>
        <authorList>
            <person name="Mayford M."/>
            <person name="Weisblum B."/>
        </authorList>
    </citation>
    <scope>NUCLEOTIDE SEQUENCE [GENOMIC DNA]</scope>
    <source>
        <plasmid>pE194</plasmid>
    </source>
</reference>
<reference key="5">
    <citation type="journal article" date="1988" name="J. Gen. Microbiol.">
        <title>The nucleotide sequence of Staphylococcus aureus plasmid pT48 conferring inducible macrolide-lincosamide-streptogramin B resistance and comparison with similar plasmids expressing constitutive resistance.</title>
        <authorList>
            <person name="Catchpole I."/>
            <person name="Thomas C."/>
            <person name="Davies A."/>
            <person name="Dyke K.G.H."/>
        </authorList>
    </citation>
    <scope>NUCLEOTIDE SEQUENCE [GENOMIC DNA]</scope>
    <source>
        <plasmid>pT48</plasmid>
    </source>
</reference>
<feature type="peptide" id="PRO_0000044005" description="23S rRNA methylase leader peptide">
    <location>
        <begin position="1"/>
        <end position="19"/>
    </location>
</feature>
<geneLocation type="plasmid">
    <name>pE194</name>
</geneLocation>
<geneLocation type="plasmid">
    <name>pT48</name>
</geneLocation>
<name>LPRM_STAAU</name>
<gene>
    <name type="primary">ermC</name>
</gene>
<protein>
    <recommendedName>
        <fullName>23S rRNA methylase leader peptide</fullName>
    </recommendedName>
    <alternativeName>
        <fullName>Erythromycin resistance leader peptide</fullName>
    </alternativeName>
</protein>
<keyword id="KW-0002">3D-structure</keyword>
<keyword id="KW-0046">Antibiotic resistance</keyword>
<keyword id="KW-0428">Leader peptide</keyword>
<keyword id="KW-0614">Plasmid</keyword>
<sequence length="19" mass="2210">MGIFSIFVISTVHYQPNKK</sequence>
<dbReference type="EMBL" id="V01278">
    <property type="protein sequence ID" value="CAA24592.1"/>
    <property type="molecule type" value="Genomic_DNA"/>
</dbReference>
<dbReference type="EMBL" id="M37841">
    <property type="protein sequence ID" value="AAA98225.1"/>
    <property type="molecule type" value="Genomic_DNA"/>
</dbReference>
<dbReference type="EMBL" id="M19652">
    <property type="protein sequence ID" value="AAA20193.1"/>
    <property type="molecule type" value="Unassigned_DNA"/>
</dbReference>
<dbReference type="PIR" id="B93717">
    <property type="entry name" value="LFSAP9"/>
</dbReference>
<dbReference type="RefSeq" id="YP_009060499.1">
    <property type="nucleotide sequence ID" value="NC_024963.1"/>
</dbReference>
<dbReference type="PDB" id="3J7Z">
    <property type="method" value="EM"/>
    <property type="resolution" value="3.90 A"/>
    <property type="chains" value="a=1-19"/>
</dbReference>
<dbReference type="PDBsum" id="3J7Z"/>
<dbReference type="SMR" id="P03063"/>
<dbReference type="EvolutionaryTrace" id="P03063"/>
<dbReference type="GO" id="GO:0046677">
    <property type="term" value="P:response to antibiotic"/>
    <property type="evidence" value="ECO:0007669"/>
    <property type="project" value="UniProtKB-KW"/>
</dbReference>
<dbReference type="InterPro" id="IPR053643">
    <property type="entry name" value="23S_rRNA_methylase_reg"/>
</dbReference>
<dbReference type="InterPro" id="IPR013204">
    <property type="entry name" value="Leader_Erm"/>
</dbReference>
<dbReference type="NCBIfam" id="NF033690">
    <property type="entry name" value="ErmCL_fam_lead"/>
    <property type="match status" value="1"/>
</dbReference>
<dbReference type="Pfam" id="PF08253">
    <property type="entry name" value="Leader_Erm"/>
    <property type="match status" value="1"/>
</dbReference>
<proteinExistence type="evidence at protein level"/>
<organism>
    <name type="scientific">Staphylococcus aureus</name>
    <dbReference type="NCBI Taxonomy" id="1280"/>
    <lineage>
        <taxon>Bacteria</taxon>
        <taxon>Bacillati</taxon>
        <taxon>Bacillota</taxon>
        <taxon>Bacilli</taxon>
        <taxon>Bacillales</taxon>
        <taxon>Staphylococcaceae</taxon>
        <taxon>Staphylococcus</taxon>
    </lineage>
</organism>
<comment type="function">
    <text>This peptide is involved in the control mechanism of the synthesis of the erythromycin resistance protein.</text>
</comment>